<feature type="chain" id="PRO_0000190559" description="4-hydroxy-3-methylbut-2-en-1-yl diphosphate synthase (flavodoxin)">
    <location>
        <begin position="1"/>
        <end position="613"/>
    </location>
</feature>
<feature type="binding site" evidence="1">
    <location>
        <position position="514"/>
    </location>
    <ligand>
        <name>[4Fe-4S] cluster</name>
        <dbReference type="ChEBI" id="CHEBI:49883"/>
    </ligand>
</feature>
<feature type="binding site" evidence="1">
    <location>
        <position position="517"/>
    </location>
    <ligand>
        <name>[4Fe-4S] cluster</name>
        <dbReference type="ChEBI" id="CHEBI:49883"/>
    </ligand>
</feature>
<feature type="binding site" evidence="1">
    <location>
        <position position="548"/>
    </location>
    <ligand>
        <name>[4Fe-4S] cluster</name>
        <dbReference type="ChEBI" id="CHEBI:49883"/>
    </ligand>
</feature>
<feature type="binding site" evidence="1">
    <location>
        <position position="555"/>
    </location>
    <ligand>
        <name>[4Fe-4S] cluster</name>
        <dbReference type="ChEBI" id="CHEBI:49883"/>
    </ligand>
</feature>
<reference key="1">
    <citation type="journal article" date="1999" name="Nat. Genet.">
        <title>Comparative genomes of Chlamydia pneumoniae and C. trachomatis.</title>
        <authorList>
            <person name="Kalman S."/>
            <person name="Mitchell W.P."/>
            <person name="Marathe R."/>
            <person name="Lammel C.J."/>
            <person name="Fan J."/>
            <person name="Hyman R.W."/>
            <person name="Olinger L."/>
            <person name="Grimwood J."/>
            <person name="Davis R.W."/>
            <person name="Stephens R.S."/>
        </authorList>
    </citation>
    <scope>NUCLEOTIDE SEQUENCE [LARGE SCALE GENOMIC DNA]</scope>
    <source>
        <strain>CWL029</strain>
    </source>
</reference>
<reference key="2">
    <citation type="journal article" date="2000" name="Nucleic Acids Res.">
        <title>Genome sequences of Chlamydia trachomatis MoPn and Chlamydia pneumoniae AR39.</title>
        <authorList>
            <person name="Read T.D."/>
            <person name="Brunham R.C."/>
            <person name="Shen C."/>
            <person name="Gill S.R."/>
            <person name="Heidelberg J.F."/>
            <person name="White O."/>
            <person name="Hickey E.K."/>
            <person name="Peterson J.D."/>
            <person name="Utterback T.R."/>
            <person name="Berry K.J."/>
            <person name="Bass S."/>
            <person name="Linher K.D."/>
            <person name="Weidman J.F."/>
            <person name="Khouri H.M."/>
            <person name="Craven B."/>
            <person name="Bowman C."/>
            <person name="Dodson R.J."/>
            <person name="Gwinn M.L."/>
            <person name="Nelson W.C."/>
            <person name="DeBoy R.T."/>
            <person name="Kolonay J.F."/>
            <person name="McClarty G."/>
            <person name="Salzberg S.L."/>
            <person name="Eisen J.A."/>
            <person name="Fraser C.M."/>
        </authorList>
    </citation>
    <scope>NUCLEOTIDE SEQUENCE [LARGE SCALE GENOMIC DNA]</scope>
    <source>
        <strain>AR39</strain>
    </source>
</reference>
<reference key="3">
    <citation type="journal article" date="2000" name="Nucleic Acids Res.">
        <title>Comparison of whole genome sequences of Chlamydia pneumoniae J138 from Japan and CWL029 from USA.</title>
        <authorList>
            <person name="Shirai M."/>
            <person name="Hirakawa H."/>
            <person name="Kimoto M."/>
            <person name="Tabuchi M."/>
            <person name="Kishi F."/>
            <person name="Ouchi K."/>
            <person name="Shiba T."/>
            <person name="Ishii K."/>
            <person name="Hattori M."/>
            <person name="Kuhara S."/>
            <person name="Nakazawa T."/>
        </authorList>
    </citation>
    <scope>NUCLEOTIDE SEQUENCE [LARGE SCALE GENOMIC DNA]</scope>
    <source>
        <strain>J138</strain>
    </source>
</reference>
<reference key="4">
    <citation type="submission" date="2002-05" db="EMBL/GenBank/DDBJ databases">
        <title>The genome sequence of Chlamydia pneumoniae TW183 and comparison with other Chlamydia strains based on whole genome sequence analysis.</title>
        <authorList>
            <person name="Geng M.M."/>
            <person name="Schuhmacher A."/>
            <person name="Muehldorfer I."/>
            <person name="Bensch K.W."/>
            <person name="Schaefer K.P."/>
            <person name="Schneider S."/>
            <person name="Pohl T."/>
            <person name="Essig A."/>
            <person name="Marre R."/>
            <person name="Melchers K."/>
        </authorList>
    </citation>
    <scope>NUCLEOTIDE SEQUENCE [LARGE SCALE GENOMIC DNA]</scope>
    <source>
        <strain>TW-183</strain>
    </source>
</reference>
<protein>
    <recommendedName>
        <fullName evidence="1">4-hydroxy-3-methylbut-2-en-1-yl diphosphate synthase (flavodoxin)</fullName>
        <ecNumber evidence="1">1.17.7.3</ecNumber>
    </recommendedName>
    <alternativeName>
        <fullName evidence="1">1-hydroxy-2-methyl-2-(E)-butenyl 4-diphosphate synthase</fullName>
    </alternativeName>
</protein>
<sequence>MTLITPAINSSRRKTHTVRIGNLYIGSDHSIKTQSMTTTLTTDIDSTVEQIYALAEHNCDIVRVTVQGIKEAQACEKIKERLIALGLNIPLVADIHFFPQAAMLVADFADKVRINPGNYIDKRNMFKGTKIYTEASYAQSLLRLEEKFAPLVEKCKRLGKAMRIGVNHGSLSERIMQKYGDTIEGMVASAIEYIAVCEKLNYRDVVFSMKSSNPKIMVTAYRQLAKDLDARGWLYPLHLGVTEAGMGVDGIIKSAVGIGTLLAEGLGDTIRCSLTGCPTTEIPVCDSLLRHTKIYLDLPEKKNPFSLQHSENFVSAAEKPAKTTLWGDVYGVFLKLYPHHLTDFTPEELLEHLGVNPVTKEKAFTTPEGVVVPPELKDAPITDVLREHFLVFHHHQVPCLYEHNEEIWDSPAVHQAPFVHFHASDPFIHTSRDFFEKQGHQGKPTKLVFSRDFDNKEEAAISIATEFGALLLDGLGEAVVLDLPNLPLQDVLKIAFGTLQNAGVRLVKTEYISCPMCGRTLFDLEEVTTRIRKRTQHLPGLKIAIMGCIVNGPGEMADADFGFVGSKTGMIDLYVKHTCVKAHIPMEDAEEELIRLLQEHGVWKDPEETKLTV</sequence>
<evidence type="ECO:0000255" key="1">
    <source>
        <dbReference type="HAMAP-Rule" id="MF_00159"/>
    </source>
</evidence>
<proteinExistence type="inferred from homology"/>
<comment type="function">
    <text evidence="1">Converts 2C-methyl-D-erythritol 2,4-cyclodiphosphate (ME-2,4cPP) into 1-hydroxy-2-methyl-2-(E)-butenyl 4-diphosphate.</text>
</comment>
<comment type="catalytic activity">
    <reaction evidence="1">
        <text>(2E)-4-hydroxy-3-methylbut-2-enyl diphosphate + oxidized [flavodoxin] + H2O + 2 H(+) = 2-C-methyl-D-erythritol 2,4-cyclic diphosphate + reduced [flavodoxin]</text>
        <dbReference type="Rhea" id="RHEA:43604"/>
        <dbReference type="Rhea" id="RHEA-COMP:10622"/>
        <dbReference type="Rhea" id="RHEA-COMP:10623"/>
        <dbReference type="ChEBI" id="CHEBI:15377"/>
        <dbReference type="ChEBI" id="CHEBI:15378"/>
        <dbReference type="ChEBI" id="CHEBI:57618"/>
        <dbReference type="ChEBI" id="CHEBI:58210"/>
        <dbReference type="ChEBI" id="CHEBI:58483"/>
        <dbReference type="ChEBI" id="CHEBI:128753"/>
        <dbReference type="EC" id="1.17.7.3"/>
    </reaction>
</comment>
<comment type="cofactor">
    <cofactor evidence="1">
        <name>[4Fe-4S] cluster</name>
        <dbReference type="ChEBI" id="CHEBI:49883"/>
    </cofactor>
    <text evidence="1">Binds 1 [4Fe-4S] cluster.</text>
</comment>
<comment type="pathway">
    <text evidence="1">Isoprenoid biosynthesis; isopentenyl diphosphate biosynthesis via DXP pathway; isopentenyl diphosphate from 1-deoxy-D-xylulose 5-phosphate: step 5/6.</text>
</comment>
<comment type="similarity">
    <text evidence="1">Belongs to the IspG family.</text>
</comment>
<accession>Q9Z8H0</accession>
<accession>Q9JQ95</accession>
<organism>
    <name type="scientific">Chlamydia pneumoniae</name>
    <name type="common">Chlamydophila pneumoniae</name>
    <dbReference type="NCBI Taxonomy" id="83558"/>
    <lineage>
        <taxon>Bacteria</taxon>
        <taxon>Pseudomonadati</taxon>
        <taxon>Chlamydiota</taxon>
        <taxon>Chlamydiia</taxon>
        <taxon>Chlamydiales</taxon>
        <taxon>Chlamydiaceae</taxon>
        <taxon>Chlamydia/Chlamydophila group</taxon>
        <taxon>Chlamydia</taxon>
    </lineage>
</organism>
<dbReference type="EC" id="1.17.7.3" evidence="1"/>
<dbReference type="EMBL" id="AE001363">
    <property type="protein sequence ID" value="AAD18517.1"/>
    <property type="molecule type" value="Genomic_DNA"/>
</dbReference>
<dbReference type="EMBL" id="AE002161">
    <property type="protein sequence ID" value="AAF38230.1"/>
    <property type="molecule type" value="Genomic_DNA"/>
</dbReference>
<dbReference type="EMBL" id="BA000008">
    <property type="protein sequence ID" value="BAA98581.1"/>
    <property type="molecule type" value="Genomic_DNA"/>
</dbReference>
<dbReference type="EMBL" id="AE009440">
    <property type="protein sequence ID" value="AAP98316.1"/>
    <property type="molecule type" value="Genomic_DNA"/>
</dbReference>
<dbReference type="PIR" id="C86537">
    <property type="entry name" value="C86537"/>
</dbReference>
<dbReference type="PIR" id="E72087">
    <property type="entry name" value="E72087"/>
</dbReference>
<dbReference type="RefSeq" id="NP_224573.1">
    <property type="nucleotide sequence ID" value="NC_000922.1"/>
</dbReference>
<dbReference type="RefSeq" id="WP_010883016.1">
    <property type="nucleotide sequence ID" value="NZ_LN847257.1"/>
</dbReference>
<dbReference type="SMR" id="Q9Z8H0"/>
<dbReference type="STRING" id="406984.CPK_ORF00883"/>
<dbReference type="GeneID" id="45050420"/>
<dbReference type="KEGG" id="cpa:CP_0383"/>
<dbReference type="KEGG" id="cpj:gcpE"/>
<dbReference type="KEGG" id="cpn:CPn_0373"/>
<dbReference type="KEGG" id="cpt:CpB0385"/>
<dbReference type="PATRIC" id="fig|115713.3.peg.415"/>
<dbReference type="eggNOG" id="COG0821">
    <property type="taxonomic scope" value="Bacteria"/>
</dbReference>
<dbReference type="HOGENOM" id="CLU_012689_0_0_0"/>
<dbReference type="OrthoDB" id="9803214at2"/>
<dbReference type="UniPathway" id="UPA00056">
    <property type="reaction ID" value="UER00096"/>
</dbReference>
<dbReference type="Proteomes" id="UP000000583">
    <property type="component" value="Chromosome"/>
</dbReference>
<dbReference type="Proteomes" id="UP000000801">
    <property type="component" value="Chromosome"/>
</dbReference>
<dbReference type="GO" id="GO:0051539">
    <property type="term" value="F:4 iron, 4 sulfur cluster binding"/>
    <property type="evidence" value="ECO:0007669"/>
    <property type="project" value="UniProtKB-UniRule"/>
</dbReference>
<dbReference type="GO" id="GO:0046429">
    <property type="term" value="F:4-hydroxy-3-methylbut-2-en-1-yl diphosphate synthase activity (ferredoxin)"/>
    <property type="evidence" value="ECO:0007669"/>
    <property type="project" value="UniProtKB-UniRule"/>
</dbReference>
<dbReference type="GO" id="GO:0141197">
    <property type="term" value="F:4-hydroxy-3-methylbut-2-enyl-diphosphate synthase activity (flavodoxin)"/>
    <property type="evidence" value="ECO:0007669"/>
    <property type="project" value="UniProtKB-EC"/>
</dbReference>
<dbReference type="GO" id="GO:0005506">
    <property type="term" value="F:iron ion binding"/>
    <property type="evidence" value="ECO:0007669"/>
    <property type="project" value="InterPro"/>
</dbReference>
<dbReference type="GO" id="GO:0019288">
    <property type="term" value="P:isopentenyl diphosphate biosynthetic process, methylerythritol 4-phosphate pathway"/>
    <property type="evidence" value="ECO:0007669"/>
    <property type="project" value="UniProtKB-UniRule"/>
</dbReference>
<dbReference type="GO" id="GO:0016114">
    <property type="term" value="P:terpenoid biosynthetic process"/>
    <property type="evidence" value="ECO:0007669"/>
    <property type="project" value="InterPro"/>
</dbReference>
<dbReference type="FunFam" id="3.20.20.20:FF:000005">
    <property type="entry name" value="4-hydroxy-3-methylbut-2-en-1-yl diphosphate synthase (flavodoxin)"/>
    <property type="match status" value="1"/>
</dbReference>
<dbReference type="FunFam" id="3.30.413.10:FF:000006">
    <property type="entry name" value="4-hydroxy-3-methylbut-2-en-1-yl diphosphate synthase (flavodoxin)"/>
    <property type="match status" value="1"/>
</dbReference>
<dbReference type="Gene3D" id="3.20.20.20">
    <property type="entry name" value="Dihydropteroate synthase-like"/>
    <property type="match status" value="1"/>
</dbReference>
<dbReference type="Gene3D" id="3.30.413.10">
    <property type="entry name" value="Sulfite Reductase Hemoprotein, domain 1"/>
    <property type="match status" value="1"/>
</dbReference>
<dbReference type="HAMAP" id="MF_00159">
    <property type="entry name" value="IspG"/>
    <property type="match status" value="1"/>
</dbReference>
<dbReference type="InterPro" id="IPR011005">
    <property type="entry name" value="Dihydropteroate_synth-like_sf"/>
</dbReference>
<dbReference type="InterPro" id="IPR017178">
    <property type="entry name" value="IspG_atypical"/>
</dbReference>
<dbReference type="InterPro" id="IPR004588">
    <property type="entry name" value="IspG_bac-typ"/>
</dbReference>
<dbReference type="InterPro" id="IPR045854">
    <property type="entry name" value="NO2/SO3_Rdtase_4Fe4S_sf"/>
</dbReference>
<dbReference type="NCBIfam" id="TIGR00612">
    <property type="entry name" value="ispG_gcpE"/>
    <property type="match status" value="1"/>
</dbReference>
<dbReference type="NCBIfam" id="NF001912">
    <property type="entry name" value="PRK00694.1"/>
    <property type="match status" value="1"/>
</dbReference>
<dbReference type="PANTHER" id="PTHR30454">
    <property type="entry name" value="4-HYDROXY-3-METHYLBUT-2-EN-1-YL DIPHOSPHATE SYNTHASE"/>
    <property type="match status" value="1"/>
</dbReference>
<dbReference type="PANTHER" id="PTHR30454:SF0">
    <property type="entry name" value="4-HYDROXY-3-METHYLBUT-2-EN-1-YL DIPHOSPHATE SYNTHASE (FERREDOXIN), CHLOROPLASTIC"/>
    <property type="match status" value="1"/>
</dbReference>
<dbReference type="Pfam" id="PF04551">
    <property type="entry name" value="GcpE"/>
    <property type="match status" value="2"/>
</dbReference>
<dbReference type="PIRSF" id="PIRSF037336">
    <property type="entry name" value="IspG_like"/>
    <property type="match status" value="1"/>
</dbReference>
<dbReference type="SUPFAM" id="SSF56014">
    <property type="entry name" value="Nitrite and sulphite reductase 4Fe-4S domain-like"/>
    <property type="match status" value="1"/>
</dbReference>
<name>ISPG_CHLPN</name>
<gene>
    <name evidence="1" type="primary">ispG</name>
    <name type="synonym">aarC</name>
    <name type="synonym">gcpE</name>
    <name type="ordered locus">CPn_0373</name>
    <name type="ordered locus">CP_0383</name>
    <name type="ordered locus">CpB0385</name>
</gene>
<keyword id="KW-0004">4Fe-4S</keyword>
<keyword id="KW-0408">Iron</keyword>
<keyword id="KW-0411">Iron-sulfur</keyword>
<keyword id="KW-0414">Isoprene biosynthesis</keyword>
<keyword id="KW-0479">Metal-binding</keyword>
<keyword id="KW-0560">Oxidoreductase</keyword>